<evidence type="ECO:0000255" key="1"/>
<evidence type="ECO:0000255" key="2">
    <source>
        <dbReference type="PROSITE-ProRule" id="PRU00066"/>
    </source>
</evidence>
<evidence type="ECO:0000255" key="3">
    <source>
        <dbReference type="PROSITE-ProRule" id="PRU00159"/>
    </source>
</evidence>
<evidence type="ECO:0000255" key="4">
    <source>
        <dbReference type="PROSITE-ProRule" id="PRU00758"/>
    </source>
</evidence>
<evidence type="ECO:0000255" key="5">
    <source>
        <dbReference type="PROSITE-ProRule" id="PRU10027"/>
    </source>
</evidence>
<evidence type="ECO:0000256" key="6">
    <source>
        <dbReference type="SAM" id="MobiDB-lite"/>
    </source>
</evidence>
<evidence type="ECO:0000305" key="7"/>
<dbReference type="EC" id="2.7.11.1"/>
<dbReference type="EMBL" id="AAFI02000085">
    <property type="protein sequence ID" value="EAL64356.1"/>
    <property type="molecule type" value="Genomic_DNA"/>
</dbReference>
<dbReference type="EMBL" id="AY232270">
    <property type="protein sequence ID" value="AAO83653.1"/>
    <property type="molecule type" value="Genomic_DNA"/>
</dbReference>
<dbReference type="RefSeq" id="XP_637871.1">
    <property type="nucleotide sequence ID" value="XM_632779.1"/>
</dbReference>
<dbReference type="SMR" id="Q54M77"/>
<dbReference type="FunCoup" id="Q54M77">
    <property type="interactions" value="93"/>
</dbReference>
<dbReference type="STRING" id="44689.Q54M77"/>
<dbReference type="GlyGen" id="Q54M77">
    <property type="glycosylation" value="1 site"/>
</dbReference>
<dbReference type="PaxDb" id="44689-DDB0191480"/>
<dbReference type="EnsemblProtists" id="EAL64356">
    <property type="protein sequence ID" value="EAL64356"/>
    <property type="gene ID" value="DDB_G0286127"/>
</dbReference>
<dbReference type="GeneID" id="8625468"/>
<dbReference type="KEGG" id="ddi:DDB_G0286127"/>
<dbReference type="dictyBase" id="DDB_G0286127">
    <property type="gene designation" value="roco8"/>
</dbReference>
<dbReference type="VEuPathDB" id="AmoebaDB:DDB_G0286127"/>
<dbReference type="eggNOG" id="KOG0192">
    <property type="taxonomic scope" value="Eukaryota"/>
</dbReference>
<dbReference type="HOGENOM" id="CLU_236521_0_0_1"/>
<dbReference type="InParanoid" id="Q54M77"/>
<dbReference type="OMA" id="MEPIVYW"/>
<dbReference type="PhylomeDB" id="Q54M77"/>
<dbReference type="Reactome" id="R-DDI-5675482">
    <property type="pathway name" value="Regulation of necroptotic cell death"/>
</dbReference>
<dbReference type="PRO" id="PR:Q54M77"/>
<dbReference type="Proteomes" id="UP000002195">
    <property type="component" value="Chromosome 4"/>
</dbReference>
<dbReference type="GO" id="GO:0005737">
    <property type="term" value="C:cytoplasm"/>
    <property type="evidence" value="ECO:0000318"/>
    <property type="project" value="GO_Central"/>
</dbReference>
<dbReference type="GO" id="GO:0005829">
    <property type="term" value="C:cytosol"/>
    <property type="evidence" value="ECO:0000304"/>
    <property type="project" value="dictyBase"/>
</dbReference>
<dbReference type="GO" id="GO:0005524">
    <property type="term" value="F:ATP binding"/>
    <property type="evidence" value="ECO:0007669"/>
    <property type="project" value="UniProtKB-KW"/>
</dbReference>
<dbReference type="GO" id="GO:0004672">
    <property type="term" value="F:protein kinase activity"/>
    <property type="evidence" value="ECO:0000318"/>
    <property type="project" value="GO_Central"/>
</dbReference>
<dbReference type="GO" id="GO:0106310">
    <property type="term" value="F:protein serine kinase activity"/>
    <property type="evidence" value="ECO:0007669"/>
    <property type="project" value="RHEA"/>
</dbReference>
<dbReference type="GO" id="GO:0004674">
    <property type="term" value="F:protein serine/threonine kinase activity"/>
    <property type="evidence" value="ECO:0007669"/>
    <property type="project" value="UniProtKB-KW"/>
</dbReference>
<dbReference type="GO" id="GO:0035556">
    <property type="term" value="P:intracellular signal transduction"/>
    <property type="evidence" value="ECO:0007669"/>
    <property type="project" value="InterPro"/>
</dbReference>
<dbReference type="GO" id="GO:0007165">
    <property type="term" value="P:signal transduction"/>
    <property type="evidence" value="ECO:0000318"/>
    <property type="project" value="GO_Central"/>
</dbReference>
<dbReference type="CDD" id="cd04371">
    <property type="entry name" value="DEP"/>
    <property type="match status" value="2"/>
</dbReference>
<dbReference type="CDD" id="cd13999">
    <property type="entry name" value="STKc_MAP3K-like"/>
    <property type="match status" value="1"/>
</dbReference>
<dbReference type="Gene3D" id="3.40.50.300">
    <property type="entry name" value="P-loop containing nucleotide triphosphate hydrolases"/>
    <property type="match status" value="1"/>
</dbReference>
<dbReference type="Gene3D" id="3.30.200.20">
    <property type="entry name" value="Phosphorylase Kinase, domain 1"/>
    <property type="match status" value="1"/>
</dbReference>
<dbReference type="Gene3D" id="3.80.10.10">
    <property type="entry name" value="Ribonuclease Inhibitor"/>
    <property type="match status" value="1"/>
</dbReference>
<dbReference type="Gene3D" id="1.10.510.10">
    <property type="entry name" value="Transferase(Phosphotransferase) domain 1"/>
    <property type="match status" value="1"/>
</dbReference>
<dbReference type="Gene3D" id="1.10.10.10">
    <property type="entry name" value="Winged helix-like DNA-binding domain superfamily/Winged helix DNA-binding domain"/>
    <property type="match status" value="3"/>
</dbReference>
<dbReference type="InterPro" id="IPR032171">
    <property type="entry name" value="COR-A"/>
</dbReference>
<dbReference type="InterPro" id="IPR000591">
    <property type="entry name" value="DEP_dom"/>
</dbReference>
<dbReference type="InterPro" id="IPR011009">
    <property type="entry name" value="Kinase-like_dom_sf"/>
</dbReference>
<dbReference type="InterPro" id="IPR001611">
    <property type="entry name" value="Leu-rich_rpt"/>
</dbReference>
<dbReference type="InterPro" id="IPR003591">
    <property type="entry name" value="Leu-rich_rpt_typical-subtyp"/>
</dbReference>
<dbReference type="InterPro" id="IPR032675">
    <property type="entry name" value="LRR_dom_sf"/>
</dbReference>
<dbReference type="InterPro" id="IPR055414">
    <property type="entry name" value="LRR_R13L4/SHOC2-like"/>
</dbReference>
<dbReference type="InterPro" id="IPR027417">
    <property type="entry name" value="P-loop_NTPase"/>
</dbReference>
<dbReference type="InterPro" id="IPR000719">
    <property type="entry name" value="Prot_kinase_dom"/>
</dbReference>
<dbReference type="InterPro" id="IPR017441">
    <property type="entry name" value="Protein_kinase_ATP_BS"/>
</dbReference>
<dbReference type="InterPro" id="IPR020859">
    <property type="entry name" value="ROC"/>
</dbReference>
<dbReference type="InterPro" id="IPR001245">
    <property type="entry name" value="Ser-Thr/Tyr_kinase_cat_dom"/>
</dbReference>
<dbReference type="InterPro" id="IPR008271">
    <property type="entry name" value="Ser/Thr_kinase_AS"/>
</dbReference>
<dbReference type="InterPro" id="IPR050167">
    <property type="entry name" value="Ser_Thr_protein_kinase"/>
</dbReference>
<dbReference type="InterPro" id="IPR036388">
    <property type="entry name" value="WH-like_DNA-bd_sf"/>
</dbReference>
<dbReference type="InterPro" id="IPR036390">
    <property type="entry name" value="WH_DNA-bd_sf"/>
</dbReference>
<dbReference type="PANTHER" id="PTHR23257">
    <property type="entry name" value="SERINE-THREONINE PROTEIN KINASE"/>
    <property type="match status" value="1"/>
</dbReference>
<dbReference type="PANTHER" id="PTHR23257:SF970">
    <property type="entry name" value="SERINE_THREONINE-PROTEIN KINASE ROCO8-RELATED"/>
    <property type="match status" value="1"/>
</dbReference>
<dbReference type="Pfam" id="PF16095">
    <property type="entry name" value="COR-A"/>
    <property type="match status" value="1"/>
</dbReference>
<dbReference type="Pfam" id="PF00610">
    <property type="entry name" value="DEP"/>
    <property type="match status" value="2"/>
</dbReference>
<dbReference type="Pfam" id="PF23598">
    <property type="entry name" value="LRR_14"/>
    <property type="match status" value="1"/>
</dbReference>
<dbReference type="Pfam" id="PF07714">
    <property type="entry name" value="PK_Tyr_Ser-Thr"/>
    <property type="match status" value="1"/>
</dbReference>
<dbReference type="Pfam" id="PF08477">
    <property type="entry name" value="Roc"/>
    <property type="match status" value="1"/>
</dbReference>
<dbReference type="PRINTS" id="PR00109">
    <property type="entry name" value="TYRKINASE"/>
</dbReference>
<dbReference type="SMART" id="SM00049">
    <property type="entry name" value="DEP"/>
    <property type="match status" value="2"/>
</dbReference>
<dbReference type="SMART" id="SM00369">
    <property type="entry name" value="LRR_TYP"/>
    <property type="match status" value="4"/>
</dbReference>
<dbReference type="SMART" id="SM00220">
    <property type="entry name" value="S_TKc"/>
    <property type="match status" value="1"/>
</dbReference>
<dbReference type="SUPFAM" id="SSF81995">
    <property type="entry name" value="beta-sandwich domain of Sec23/24"/>
    <property type="match status" value="1"/>
</dbReference>
<dbReference type="SUPFAM" id="SSF52058">
    <property type="entry name" value="L domain-like"/>
    <property type="match status" value="1"/>
</dbReference>
<dbReference type="SUPFAM" id="SSF52540">
    <property type="entry name" value="P-loop containing nucleoside triphosphate hydrolases"/>
    <property type="match status" value="1"/>
</dbReference>
<dbReference type="SUPFAM" id="SSF56112">
    <property type="entry name" value="Protein kinase-like (PK-like)"/>
    <property type="match status" value="1"/>
</dbReference>
<dbReference type="SUPFAM" id="SSF46785">
    <property type="entry name" value="Winged helix' DNA-binding domain"/>
    <property type="match status" value="2"/>
</dbReference>
<dbReference type="PROSITE" id="PS50186">
    <property type="entry name" value="DEP"/>
    <property type="match status" value="2"/>
</dbReference>
<dbReference type="PROSITE" id="PS51450">
    <property type="entry name" value="LRR"/>
    <property type="match status" value="7"/>
</dbReference>
<dbReference type="PROSITE" id="PS00107">
    <property type="entry name" value="PROTEIN_KINASE_ATP"/>
    <property type="match status" value="1"/>
</dbReference>
<dbReference type="PROSITE" id="PS50011">
    <property type="entry name" value="PROTEIN_KINASE_DOM"/>
    <property type="match status" value="1"/>
</dbReference>
<dbReference type="PROSITE" id="PS00108">
    <property type="entry name" value="PROTEIN_KINASE_ST"/>
    <property type="match status" value="1"/>
</dbReference>
<dbReference type="PROSITE" id="PS51424">
    <property type="entry name" value="ROC"/>
    <property type="match status" value="1"/>
</dbReference>
<sequence>MFDYNQLNKLKDKIQSSDGLQIKDRTYLYKTYRSVFVGYECVDWIFGNCPDIKTREDAIKLGQTLFDAGIICNVTSGADPIFKDDYIFYQFDNNKNNNNINNNNNNATSTATTATAPITPVSTKIGSIGKSSSKSSTAVDKMNNNNNNNNNNNNNNNNNNNNNSNNSNSNNNSSRRTSSVPPPVLVTASLSSSTSSSSSSTTSTSSSLASTNTNSNSTYNSNSFNKKHHRYSINELSKVVLEDLNTVTLVKDELIQLSQELMNGDKGLKLQKKKKGAAGTTISCFSGSQLIDWLVKKLEVTRKESIQIASALMHLNIFIEVGTIFNSSNNNNNNNNGGGGVMSSTLSTTIPSSISLQQLSNQSQSNSNSSSSSSILNLSFTAPISISSTTATMSSSLSLSTTAATTTTTTTSSSLLNNSSSGSGFLVPTLPASVLNSSSNSNNQLYSSSPLSLSTSSIPAFDNRIVEDCGNVFYEFLTKPEAIINHVAMRRLDDLCLTHKCISIIPTTIINTSKFLRIIDLSFNQLSESNQLESIATLYNLESCNLSHNQLSTLPSSFSRLELLTKLILSHNCFQVIPNVVFQLSNLEELSLAANQLSSISESIGSLKSLEKLDLSFNKQINKIPKELGLLVRLKSLNVLGSNKINELPSFLSTLPLLEQLDFSRDIIKSPPKEITSKGFTHIIGYLKDLFEGTETLSHIKLMVLGSEKTGRSSLVKALTKSQTKSLSRQSANFLKKVTSSEVSLNDPIEIIQLKLDLPPEQQNGIMTSSSNLNLSTGTLPPPTQLSSSTSELKPQRKDSFGSSMTTPEKKRPTKRNVKLMIYDFRMPSIDVYYHTHQFFLSERAFYLVTYDINKDLSHSGLEFWVESIKKKAPNAPIYIVATHIDTFNQYGGDILVPLNEIDQYLTQRSLEVTGVIGVSSTTLRNIDLLKNEIIQTLLNQSNNNNNNNNNNNYNNNKQSNSISTTNWLNERIPSIYITLETNLQEEAKKRPIVTWDEYQNIAKLSNFTTSSYEKLVRATNTLNRWGSIIWFEDSKSSLKDFVILDPQWFSDCFYKLLLAKHSFINSDGILLLSNLKNIWKPNIVPEQFHIKLLKLLERYQILYTLKNNSNLQQLQQQQQQQKSFGNLSKENSLNSMSYSIESRSSSSPLPTVVTLSAEISSSPSLSLSNSSQSVFTNPNNNNNNKSEQQQQQQQQQQQPQPISTSPKLLRNSLKNLKSIENNSSSLSNNSILNSNSNSSGNLLQNGSYISFNRIIIPCLLPNGKPSHLASLWDTWSGEDEHQIGRYYQFRNISAKNCFERVMVRFLYMMEPIVYWSTGILFRKTQTYRENIKDSMSSCGTLVEFDTVTQQLQIRVRGHEFDACAKLFQIVLENVDTILKDYQINQSQTYIPCSCSCECRDLPHLFPIDLIEETFGKGESHTKCPITMKLVSLCKISPDITLSSVSSNKKVSKEDLIYQEEIGVGGFSRVYKGIYKNNTVAIKQFNFERMDLIDSTSFNNLNSLTISPSNSSLSISLSSSTSSLSPPIVNNNNNNNNLNNNLNNLNNNNKLYIQQQQQTQQNQQQQQQQQQQQQQQQQQQQQQQQQQQQQQQQQQQQNQQQPKILQRNLSTSSLSSNSSQGEDSMNQISSGKLNAINEFRREVWLMSGLSHSNIVLMKGFCFEPYAIVMEYMDIGSLSSFLKKKKEDGQVLDWQMLLKIVTDIASGMAFLHNITPPLVHRDLKSPNILLASHPTNPNEISAKVSDFGLSRSIVQNFSSKVVDNPTWQSPEVLKGMEYNEKSDIYSFGMILWECYHLELPFDEFDFKFMSTLEDNILSGLRPSINQNCNRMYSSLITKCWNADPNLRPSFNSILKTLNEIKDSTINSK</sequence>
<feature type="chain" id="PRO_0000358894" description="Probable serine/threonine-protein kinase roco8">
    <location>
        <begin position="1"/>
        <end position="1867"/>
    </location>
</feature>
<feature type="domain" description="DEP 1" evidence="2">
    <location>
        <begin position="16"/>
        <end position="93"/>
    </location>
</feature>
<feature type="domain" description="DEP 2" evidence="2">
    <location>
        <begin position="264"/>
        <end position="342"/>
    </location>
</feature>
<feature type="repeat" description="LRR 1">
    <location>
        <begin position="491"/>
        <end position="512"/>
    </location>
</feature>
<feature type="repeat" description="LRR 2">
    <location>
        <begin position="515"/>
        <end position="536"/>
    </location>
</feature>
<feature type="repeat" description="LRR 3">
    <location>
        <begin position="540"/>
        <end position="561"/>
    </location>
</feature>
<feature type="repeat" description="LRR 4">
    <location>
        <begin position="563"/>
        <end position="584"/>
    </location>
</feature>
<feature type="repeat" description="LRR 5">
    <location>
        <begin position="586"/>
        <end position="607"/>
    </location>
</feature>
<feature type="repeat" description="LRR 6">
    <location>
        <begin position="609"/>
        <end position="631"/>
    </location>
</feature>
<feature type="repeat" description="LRR 7">
    <location>
        <begin position="633"/>
        <end position="656"/>
    </location>
</feature>
<feature type="repeat" description="LRR 8">
    <location>
        <begin position="657"/>
        <end position="678"/>
    </location>
</feature>
<feature type="domain" description="Roc" evidence="4">
    <location>
        <begin position="693"/>
        <end position="941"/>
    </location>
</feature>
<feature type="domain" description="COR" evidence="1">
    <location>
        <begin position="974"/>
        <end position="1111"/>
    </location>
</feature>
<feature type="domain" description="Protein kinase" evidence="3">
    <location>
        <begin position="1456"/>
        <end position="1864"/>
    </location>
</feature>
<feature type="region of interest" description="Disordered" evidence="6">
    <location>
        <begin position="96"/>
        <end position="115"/>
    </location>
</feature>
<feature type="region of interest" description="Disordered" evidence="6">
    <location>
        <begin position="121"/>
        <end position="225"/>
    </location>
</feature>
<feature type="region of interest" description="Disordered" evidence="6">
    <location>
        <begin position="763"/>
        <end position="813"/>
    </location>
</feature>
<feature type="region of interest" description="Disordered" evidence="6">
    <location>
        <begin position="942"/>
        <end position="961"/>
    </location>
</feature>
<feature type="region of interest" description="Disordered" evidence="6">
    <location>
        <begin position="1163"/>
        <end position="1207"/>
    </location>
</feature>
<feature type="region of interest" description="Disordered" evidence="6">
    <location>
        <begin position="1509"/>
        <end position="1546"/>
    </location>
</feature>
<feature type="compositionally biased region" description="Low complexity" evidence="6">
    <location>
        <begin position="121"/>
        <end position="223"/>
    </location>
</feature>
<feature type="compositionally biased region" description="Low complexity" evidence="6">
    <location>
        <begin position="768"/>
        <end position="793"/>
    </location>
</feature>
<feature type="active site" description="Proton acceptor" evidence="3 5">
    <location>
        <position position="1721"/>
    </location>
</feature>
<feature type="binding site" evidence="3">
    <location>
        <begin position="1462"/>
        <end position="1470"/>
    </location>
    <ligand>
        <name>ATP</name>
        <dbReference type="ChEBI" id="CHEBI:30616"/>
    </ligand>
</feature>
<feature type="binding site" evidence="3">
    <location>
        <position position="1483"/>
    </location>
    <ligand>
        <name>ATP</name>
        <dbReference type="ChEBI" id="CHEBI:30616"/>
    </ligand>
</feature>
<proteinExistence type="inferred from homology"/>
<accession>Q54M77</accession>
<accession>Q6XHA8</accession>
<keyword id="KW-0067">ATP-binding</keyword>
<keyword id="KW-0418">Kinase</keyword>
<keyword id="KW-0433">Leucine-rich repeat</keyword>
<keyword id="KW-0547">Nucleotide-binding</keyword>
<keyword id="KW-1185">Reference proteome</keyword>
<keyword id="KW-0677">Repeat</keyword>
<keyword id="KW-0723">Serine/threonine-protein kinase</keyword>
<keyword id="KW-0808">Transferase</keyword>
<name>ROCO8_DICDI</name>
<reference key="1">
    <citation type="journal article" date="2005" name="Nature">
        <title>The genome of the social amoeba Dictyostelium discoideum.</title>
        <authorList>
            <person name="Eichinger L."/>
            <person name="Pachebat J.A."/>
            <person name="Gloeckner G."/>
            <person name="Rajandream M.A."/>
            <person name="Sucgang R."/>
            <person name="Berriman M."/>
            <person name="Song J."/>
            <person name="Olsen R."/>
            <person name="Szafranski K."/>
            <person name="Xu Q."/>
            <person name="Tunggal B."/>
            <person name="Kummerfeld S."/>
            <person name="Madera M."/>
            <person name="Konfortov B.A."/>
            <person name="Rivero F."/>
            <person name="Bankier A.T."/>
            <person name="Lehmann R."/>
            <person name="Hamlin N."/>
            <person name="Davies R."/>
            <person name="Gaudet P."/>
            <person name="Fey P."/>
            <person name="Pilcher K."/>
            <person name="Chen G."/>
            <person name="Saunders D."/>
            <person name="Sodergren E.J."/>
            <person name="Davis P."/>
            <person name="Kerhornou A."/>
            <person name="Nie X."/>
            <person name="Hall N."/>
            <person name="Anjard C."/>
            <person name="Hemphill L."/>
            <person name="Bason N."/>
            <person name="Farbrother P."/>
            <person name="Desany B."/>
            <person name="Just E."/>
            <person name="Morio T."/>
            <person name="Rost R."/>
            <person name="Churcher C.M."/>
            <person name="Cooper J."/>
            <person name="Haydock S."/>
            <person name="van Driessche N."/>
            <person name="Cronin A."/>
            <person name="Goodhead I."/>
            <person name="Muzny D.M."/>
            <person name="Mourier T."/>
            <person name="Pain A."/>
            <person name="Lu M."/>
            <person name="Harper D."/>
            <person name="Lindsay R."/>
            <person name="Hauser H."/>
            <person name="James K.D."/>
            <person name="Quiles M."/>
            <person name="Madan Babu M."/>
            <person name="Saito T."/>
            <person name="Buchrieser C."/>
            <person name="Wardroper A."/>
            <person name="Felder M."/>
            <person name="Thangavelu M."/>
            <person name="Johnson D."/>
            <person name="Knights A."/>
            <person name="Loulseged H."/>
            <person name="Mungall K.L."/>
            <person name="Oliver K."/>
            <person name="Price C."/>
            <person name="Quail M.A."/>
            <person name="Urushihara H."/>
            <person name="Hernandez J."/>
            <person name="Rabbinowitsch E."/>
            <person name="Steffen D."/>
            <person name="Sanders M."/>
            <person name="Ma J."/>
            <person name="Kohara Y."/>
            <person name="Sharp S."/>
            <person name="Simmonds M.N."/>
            <person name="Spiegler S."/>
            <person name="Tivey A."/>
            <person name="Sugano S."/>
            <person name="White B."/>
            <person name="Walker D."/>
            <person name="Woodward J.R."/>
            <person name="Winckler T."/>
            <person name="Tanaka Y."/>
            <person name="Shaulsky G."/>
            <person name="Schleicher M."/>
            <person name="Weinstock G.M."/>
            <person name="Rosenthal A."/>
            <person name="Cox E.C."/>
            <person name="Chisholm R.L."/>
            <person name="Gibbs R.A."/>
            <person name="Loomis W.F."/>
            <person name="Platzer M."/>
            <person name="Kay R.R."/>
            <person name="Williams J.G."/>
            <person name="Dear P.H."/>
            <person name="Noegel A.A."/>
            <person name="Barrell B.G."/>
            <person name="Kuspa A."/>
        </authorList>
    </citation>
    <scope>NUCLEOTIDE SEQUENCE [LARGE SCALE GENOMIC DNA]</scope>
    <source>
        <strain>AX4</strain>
    </source>
</reference>
<reference key="2">
    <citation type="journal article" date="2003" name="Biochim. Biophys. Acta">
        <title>Roc, a Ras/GTPase domain in complex proteins.</title>
        <authorList>
            <person name="Bosgraaf L."/>
            <person name="van Haastert P.J.M."/>
        </authorList>
    </citation>
    <scope>NUCLEOTIDE SEQUENCE [GENOMIC DNA] OF 102-1867</scope>
</reference>
<protein>
    <recommendedName>
        <fullName>Probable serine/threonine-protein kinase roco8</fullName>
        <ecNumber>2.7.11.1</ecNumber>
    </recommendedName>
    <alternativeName>
        <fullName>Ras of complex proteins and C-terminal of roc 8</fullName>
    </alternativeName>
</protein>
<comment type="catalytic activity">
    <reaction>
        <text>L-seryl-[protein] + ATP = O-phospho-L-seryl-[protein] + ADP + H(+)</text>
        <dbReference type="Rhea" id="RHEA:17989"/>
        <dbReference type="Rhea" id="RHEA-COMP:9863"/>
        <dbReference type="Rhea" id="RHEA-COMP:11604"/>
        <dbReference type="ChEBI" id="CHEBI:15378"/>
        <dbReference type="ChEBI" id="CHEBI:29999"/>
        <dbReference type="ChEBI" id="CHEBI:30616"/>
        <dbReference type="ChEBI" id="CHEBI:83421"/>
        <dbReference type="ChEBI" id="CHEBI:456216"/>
        <dbReference type="EC" id="2.7.11.1"/>
    </reaction>
</comment>
<comment type="catalytic activity">
    <reaction>
        <text>L-threonyl-[protein] + ATP = O-phospho-L-threonyl-[protein] + ADP + H(+)</text>
        <dbReference type="Rhea" id="RHEA:46608"/>
        <dbReference type="Rhea" id="RHEA-COMP:11060"/>
        <dbReference type="Rhea" id="RHEA-COMP:11605"/>
        <dbReference type="ChEBI" id="CHEBI:15378"/>
        <dbReference type="ChEBI" id="CHEBI:30013"/>
        <dbReference type="ChEBI" id="CHEBI:30616"/>
        <dbReference type="ChEBI" id="CHEBI:61977"/>
        <dbReference type="ChEBI" id="CHEBI:456216"/>
        <dbReference type="EC" id="2.7.11.1"/>
    </reaction>
</comment>
<comment type="similarity">
    <text evidence="7">Belongs to the protein kinase superfamily. TKL Ser/Thr protein kinase family. ROCO subfamily.</text>
</comment>
<gene>
    <name type="primary">roco8</name>
    <name type="ORF">DDB_G0286127</name>
</gene>
<organism>
    <name type="scientific">Dictyostelium discoideum</name>
    <name type="common">Social amoeba</name>
    <dbReference type="NCBI Taxonomy" id="44689"/>
    <lineage>
        <taxon>Eukaryota</taxon>
        <taxon>Amoebozoa</taxon>
        <taxon>Evosea</taxon>
        <taxon>Eumycetozoa</taxon>
        <taxon>Dictyostelia</taxon>
        <taxon>Dictyosteliales</taxon>
        <taxon>Dictyosteliaceae</taxon>
        <taxon>Dictyostelium</taxon>
    </lineage>
</organism>